<gene>
    <name evidence="1" type="primary">aroA</name>
    <name type="ordered locus">APP7_0741</name>
</gene>
<reference key="1">
    <citation type="submission" date="2008-06" db="EMBL/GenBank/DDBJ databases">
        <title>Genome and proteome analysis of A. pleuropneumoniae serotype 7.</title>
        <authorList>
            <person name="Linke B."/>
            <person name="Buettner F."/>
            <person name="Martinez-Arias R."/>
            <person name="Goesmann A."/>
            <person name="Baltes N."/>
            <person name="Tegetmeyer H."/>
            <person name="Singh M."/>
            <person name="Gerlach G.F."/>
        </authorList>
    </citation>
    <scope>NUCLEOTIDE SEQUENCE [LARGE SCALE GENOMIC DNA]</scope>
    <source>
        <strain>AP76</strain>
    </source>
</reference>
<comment type="function">
    <text evidence="1">Catalyzes the transfer of the enolpyruvyl moiety of phosphoenolpyruvate (PEP) to the 5-hydroxyl of shikimate-3-phosphate (S3P) to produce enolpyruvyl shikimate-3-phosphate and inorganic phosphate.</text>
</comment>
<comment type="catalytic activity">
    <reaction evidence="1">
        <text>3-phosphoshikimate + phosphoenolpyruvate = 5-O-(1-carboxyvinyl)-3-phosphoshikimate + phosphate</text>
        <dbReference type="Rhea" id="RHEA:21256"/>
        <dbReference type="ChEBI" id="CHEBI:43474"/>
        <dbReference type="ChEBI" id="CHEBI:57701"/>
        <dbReference type="ChEBI" id="CHEBI:58702"/>
        <dbReference type="ChEBI" id="CHEBI:145989"/>
        <dbReference type="EC" id="2.5.1.19"/>
    </reaction>
    <physiologicalReaction direction="left-to-right" evidence="1">
        <dbReference type="Rhea" id="RHEA:21257"/>
    </physiologicalReaction>
</comment>
<comment type="pathway">
    <text evidence="1">Metabolic intermediate biosynthesis; chorismate biosynthesis; chorismate from D-erythrose 4-phosphate and phosphoenolpyruvate: step 6/7.</text>
</comment>
<comment type="subunit">
    <text evidence="1">Monomer.</text>
</comment>
<comment type="subcellular location">
    <subcellularLocation>
        <location evidence="1">Cytoplasm</location>
    </subcellularLocation>
</comment>
<comment type="similarity">
    <text evidence="1">Belongs to the EPSP synthase family.</text>
</comment>
<dbReference type="EC" id="2.5.1.19" evidence="1"/>
<dbReference type="EMBL" id="CP001091">
    <property type="protein sequence ID" value="ACE61393.1"/>
    <property type="molecule type" value="Genomic_DNA"/>
</dbReference>
<dbReference type="RefSeq" id="WP_005617198.1">
    <property type="nucleotide sequence ID" value="NC_010939.1"/>
</dbReference>
<dbReference type="SMR" id="B3GXD4"/>
<dbReference type="KEGG" id="apa:APP7_0741"/>
<dbReference type="HOGENOM" id="CLU_024321_0_0_6"/>
<dbReference type="UniPathway" id="UPA00053">
    <property type="reaction ID" value="UER00089"/>
</dbReference>
<dbReference type="Proteomes" id="UP000001226">
    <property type="component" value="Chromosome"/>
</dbReference>
<dbReference type="GO" id="GO:0005737">
    <property type="term" value="C:cytoplasm"/>
    <property type="evidence" value="ECO:0007669"/>
    <property type="project" value="UniProtKB-SubCell"/>
</dbReference>
<dbReference type="GO" id="GO:0003866">
    <property type="term" value="F:3-phosphoshikimate 1-carboxyvinyltransferase activity"/>
    <property type="evidence" value="ECO:0007669"/>
    <property type="project" value="UniProtKB-UniRule"/>
</dbReference>
<dbReference type="GO" id="GO:0008652">
    <property type="term" value="P:amino acid biosynthetic process"/>
    <property type="evidence" value="ECO:0007669"/>
    <property type="project" value="UniProtKB-KW"/>
</dbReference>
<dbReference type="GO" id="GO:0009073">
    <property type="term" value="P:aromatic amino acid family biosynthetic process"/>
    <property type="evidence" value="ECO:0007669"/>
    <property type="project" value="UniProtKB-KW"/>
</dbReference>
<dbReference type="GO" id="GO:0009423">
    <property type="term" value="P:chorismate biosynthetic process"/>
    <property type="evidence" value="ECO:0007669"/>
    <property type="project" value="UniProtKB-UniRule"/>
</dbReference>
<dbReference type="CDD" id="cd01556">
    <property type="entry name" value="EPSP_synthase"/>
    <property type="match status" value="1"/>
</dbReference>
<dbReference type="FunFam" id="3.65.10.10:FF:000003">
    <property type="entry name" value="3-phosphoshikimate 1-carboxyvinyltransferase"/>
    <property type="match status" value="1"/>
</dbReference>
<dbReference type="FunFam" id="3.65.10.10:FF:000004">
    <property type="entry name" value="3-phosphoshikimate 1-carboxyvinyltransferase"/>
    <property type="match status" value="1"/>
</dbReference>
<dbReference type="Gene3D" id="3.65.10.10">
    <property type="entry name" value="Enolpyruvate transferase domain"/>
    <property type="match status" value="2"/>
</dbReference>
<dbReference type="HAMAP" id="MF_00210">
    <property type="entry name" value="EPSP_synth"/>
    <property type="match status" value="1"/>
</dbReference>
<dbReference type="InterPro" id="IPR001986">
    <property type="entry name" value="Enolpyruvate_Tfrase_dom"/>
</dbReference>
<dbReference type="InterPro" id="IPR036968">
    <property type="entry name" value="Enolpyruvate_Tfrase_sf"/>
</dbReference>
<dbReference type="InterPro" id="IPR006264">
    <property type="entry name" value="EPSP_synthase"/>
</dbReference>
<dbReference type="InterPro" id="IPR023193">
    <property type="entry name" value="EPSP_synthase_CS"/>
</dbReference>
<dbReference type="InterPro" id="IPR013792">
    <property type="entry name" value="RNA3'P_cycl/enolpyr_Trfase_a/b"/>
</dbReference>
<dbReference type="NCBIfam" id="TIGR01356">
    <property type="entry name" value="aroA"/>
    <property type="match status" value="1"/>
</dbReference>
<dbReference type="PANTHER" id="PTHR21090">
    <property type="entry name" value="AROM/DEHYDROQUINATE SYNTHASE"/>
    <property type="match status" value="1"/>
</dbReference>
<dbReference type="PANTHER" id="PTHR21090:SF5">
    <property type="entry name" value="PENTAFUNCTIONAL AROM POLYPEPTIDE"/>
    <property type="match status" value="1"/>
</dbReference>
<dbReference type="Pfam" id="PF00275">
    <property type="entry name" value="EPSP_synthase"/>
    <property type="match status" value="1"/>
</dbReference>
<dbReference type="PIRSF" id="PIRSF000505">
    <property type="entry name" value="EPSPS"/>
    <property type="match status" value="1"/>
</dbReference>
<dbReference type="SUPFAM" id="SSF55205">
    <property type="entry name" value="EPT/RTPC-like"/>
    <property type="match status" value="1"/>
</dbReference>
<dbReference type="PROSITE" id="PS00104">
    <property type="entry name" value="EPSP_SYNTHASE_1"/>
    <property type="match status" value="1"/>
</dbReference>
<dbReference type="PROSITE" id="PS00885">
    <property type="entry name" value="EPSP_SYNTHASE_2"/>
    <property type="match status" value="1"/>
</dbReference>
<name>AROA_ACTP7</name>
<feature type="chain" id="PRO_1000099659" description="3-phosphoshikimate 1-carboxyvinyltransferase">
    <location>
        <begin position="1"/>
        <end position="432"/>
    </location>
</feature>
<feature type="active site" description="Proton acceptor" evidence="1">
    <location>
        <position position="316"/>
    </location>
</feature>
<feature type="binding site" evidence="1">
    <location>
        <position position="22"/>
    </location>
    <ligand>
        <name>3-phosphoshikimate</name>
        <dbReference type="ChEBI" id="CHEBI:145989"/>
    </ligand>
</feature>
<feature type="binding site" evidence="1">
    <location>
        <position position="22"/>
    </location>
    <ligand>
        <name>phosphoenolpyruvate</name>
        <dbReference type="ChEBI" id="CHEBI:58702"/>
    </ligand>
</feature>
<feature type="binding site" evidence="1">
    <location>
        <position position="23"/>
    </location>
    <ligand>
        <name>3-phosphoshikimate</name>
        <dbReference type="ChEBI" id="CHEBI:145989"/>
    </ligand>
</feature>
<feature type="binding site" evidence="1">
    <location>
        <position position="27"/>
    </location>
    <ligand>
        <name>3-phosphoshikimate</name>
        <dbReference type="ChEBI" id="CHEBI:145989"/>
    </ligand>
</feature>
<feature type="binding site" evidence="1">
    <location>
        <position position="96"/>
    </location>
    <ligand>
        <name>phosphoenolpyruvate</name>
        <dbReference type="ChEBI" id="CHEBI:58702"/>
    </ligand>
</feature>
<feature type="binding site" evidence="1">
    <location>
        <position position="127"/>
    </location>
    <ligand>
        <name>phosphoenolpyruvate</name>
        <dbReference type="ChEBI" id="CHEBI:58702"/>
    </ligand>
</feature>
<feature type="binding site" evidence="1">
    <location>
        <position position="173"/>
    </location>
    <ligand>
        <name>3-phosphoshikimate</name>
        <dbReference type="ChEBI" id="CHEBI:145989"/>
    </ligand>
</feature>
<feature type="binding site" evidence="1">
    <location>
        <position position="174"/>
    </location>
    <ligand>
        <name>3-phosphoshikimate</name>
        <dbReference type="ChEBI" id="CHEBI:145989"/>
    </ligand>
</feature>
<feature type="binding site" evidence="1">
    <location>
        <position position="175"/>
    </location>
    <ligand>
        <name>3-phosphoshikimate</name>
        <dbReference type="ChEBI" id="CHEBI:145989"/>
    </ligand>
</feature>
<feature type="binding site" evidence="1">
    <location>
        <position position="175"/>
    </location>
    <ligand>
        <name>phosphoenolpyruvate</name>
        <dbReference type="ChEBI" id="CHEBI:58702"/>
    </ligand>
</feature>
<feature type="binding site" evidence="1">
    <location>
        <position position="201"/>
    </location>
    <ligand>
        <name>3-phosphoshikimate</name>
        <dbReference type="ChEBI" id="CHEBI:145989"/>
    </ligand>
</feature>
<feature type="binding site" evidence="1">
    <location>
        <position position="316"/>
    </location>
    <ligand>
        <name>3-phosphoshikimate</name>
        <dbReference type="ChEBI" id="CHEBI:145989"/>
    </ligand>
</feature>
<feature type="binding site" evidence="1">
    <location>
        <position position="339"/>
    </location>
    <ligand>
        <name>3-phosphoshikimate</name>
        <dbReference type="ChEBI" id="CHEBI:145989"/>
    </ligand>
</feature>
<feature type="binding site" evidence="1">
    <location>
        <position position="343"/>
    </location>
    <ligand>
        <name>3-phosphoshikimate</name>
        <dbReference type="ChEBI" id="CHEBI:145989"/>
    </ligand>
</feature>
<feature type="binding site" evidence="1">
    <location>
        <position position="347"/>
    </location>
    <ligand>
        <name>phosphoenolpyruvate</name>
        <dbReference type="ChEBI" id="CHEBI:58702"/>
    </ligand>
</feature>
<feature type="binding site" evidence="1">
    <location>
        <position position="391"/>
    </location>
    <ligand>
        <name>phosphoenolpyruvate</name>
        <dbReference type="ChEBI" id="CHEBI:58702"/>
    </ligand>
</feature>
<feature type="binding site" evidence="1">
    <location>
        <position position="416"/>
    </location>
    <ligand>
        <name>phosphoenolpyruvate</name>
        <dbReference type="ChEBI" id="CHEBI:58702"/>
    </ligand>
</feature>
<keyword id="KW-0028">Amino-acid biosynthesis</keyword>
<keyword id="KW-0057">Aromatic amino acid biosynthesis</keyword>
<keyword id="KW-0963">Cytoplasm</keyword>
<keyword id="KW-0808">Transferase</keyword>
<evidence type="ECO:0000255" key="1">
    <source>
        <dbReference type="HAMAP-Rule" id="MF_00210"/>
    </source>
</evidence>
<proteinExistence type="inferred from homology"/>
<accession>B3GXD4</accession>
<organism>
    <name type="scientific">Actinobacillus pleuropneumoniae serotype 7 (strain AP76)</name>
    <dbReference type="NCBI Taxonomy" id="537457"/>
    <lineage>
        <taxon>Bacteria</taxon>
        <taxon>Pseudomonadati</taxon>
        <taxon>Pseudomonadota</taxon>
        <taxon>Gammaproteobacteria</taxon>
        <taxon>Pasteurellales</taxon>
        <taxon>Pasteurellaceae</taxon>
        <taxon>Actinobacillus</taxon>
    </lineage>
</organism>
<protein>
    <recommendedName>
        <fullName evidence="1">3-phosphoshikimate 1-carboxyvinyltransferase</fullName>
        <ecNumber evidence="1">2.5.1.19</ecNumber>
    </recommendedName>
    <alternativeName>
        <fullName evidence="1">5-enolpyruvylshikimate-3-phosphate synthase</fullName>
        <shortName evidence="1">EPSP synthase</shortName>
        <shortName evidence="1">EPSPS</shortName>
    </alternativeName>
</protein>
<sequence>MEKITLAPISRVEGEINLPGSKSLSNRALLLAALAKGTTKVTNLLDSDDIRHMLNALKALGVNYSLSEDKTVCTVEGVGGAFNWKNGLALFLGNAGTAMRPLTAALCLKGATEAEVVLTGEPRMKERPIKHLVDALRQAGASVQYLENEGYPPVAIRNSGLKGGKVQIDGSISSQFLTALLMAAPLAEGDMEIEIIGELVSKPYIDITLAMMKDFGVKVENRNYQTFVVKGNQSYLSPEKYLVEGDASSASYFLAAGAIKGKVKVTGIGKNSIQGDRLFANVLEAMGAKITWGDDFIQAEQGKLKGVDMDMNHIPDAAMTIATAALFAEGETVIRNIYNWRVKETDRLTAMATELRKVGATVEEGEDFIRIQPLPLTQFQHAEIATYNDHRMAMCFSLIALSDTPVTILDPKCTAKTFPTYFTEFEKLSERT</sequence>